<dbReference type="EMBL" id="CR857372">
    <property type="protein sequence ID" value="CAH89666.1"/>
    <property type="molecule type" value="mRNA"/>
</dbReference>
<dbReference type="RefSeq" id="NP_001124752.1">
    <property type="nucleotide sequence ID" value="NM_001131280.2"/>
</dbReference>
<dbReference type="SMR" id="Q5REZ1"/>
<dbReference type="STRING" id="9601.ENSPPYP00000015887"/>
<dbReference type="GeneID" id="100171602"/>
<dbReference type="KEGG" id="pon:100171602"/>
<dbReference type="CTD" id="27230"/>
<dbReference type="eggNOG" id="KOG3491">
    <property type="taxonomic scope" value="Eukaryota"/>
</dbReference>
<dbReference type="InParanoid" id="Q5REZ1"/>
<dbReference type="OrthoDB" id="16679at2759"/>
<dbReference type="Proteomes" id="UP000001595">
    <property type="component" value="Unplaced"/>
</dbReference>
<dbReference type="GO" id="GO:0005881">
    <property type="term" value="C:cytoplasmic microtubule"/>
    <property type="evidence" value="ECO:0000250"/>
    <property type="project" value="UniProtKB"/>
</dbReference>
<dbReference type="GO" id="GO:0005789">
    <property type="term" value="C:endoplasmic reticulum membrane"/>
    <property type="evidence" value="ECO:0007669"/>
    <property type="project" value="UniProtKB-SubCell"/>
</dbReference>
<dbReference type="GO" id="GO:0030968">
    <property type="term" value="P:endoplasmic reticulum unfolded protein response"/>
    <property type="evidence" value="ECO:0007669"/>
    <property type="project" value="TreeGrafter"/>
</dbReference>
<dbReference type="InterPro" id="IPR010580">
    <property type="entry name" value="ER_stress-assoc"/>
</dbReference>
<dbReference type="PANTHER" id="PTHR15601">
    <property type="entry name" value="STRESS ASSOCIATED ENDOPLASMIC RETICULUM PROTEIN SERP1/RAMP4"/>
    <property type="match status" value="1"/>
</dbReference>
<dbReference type="PANTHER" id="PTHR15601:SF14">
    <property type="entry name" value="STRESS-ASSOCIATED ENDOPLASMIC RETICULUM PROTEIN 1"/>
    <property type="match status" value="1"/>
</dbReference>
<dbReference type="Pfam" id="PF06624">
    <property type="entry name" value="RAMP4"/>
    <property type="match status" value="1"/>
</dbReference>
<evidence type="ECO:0000250" key="1">
    <source>
        <dbReference type="UniProtKB" id="Q9R2C1"/>
    </source>
</evidence>
<evidence type="ECO:0000255" key="2"/>
<evidence type="ECO:0000256" key="3">
    <source>
        <dbReference type="SAM" id="MobiDB-lite"/>
    </source>
</evidence>
<evidence type="ECO:0000305" key="4"/>
<organism>
    <name type="scientific">Pongo abelii</name>
    <name type="common">Sumatran orangutan</name>
    <name type="synonym">Pongo pygmaeus abelii</name>
    <dbReference type="NCBI Taxonomy" id="9601"/>
    <lineage>
        <taxon>Eukaryota</taxon>
        <taxon>Metazoa</taxon>
        <taxon>Chordata</taxon>
        <taxon>Craniata</taxon>
        <taxon>Vertebrata</taxon>
        <taxon>Euteleostomi</taxon>
        <taxon>Mammalia</taxon>
        <taxon>Eutheria</taxon>
        <taxon>Euarchontoglires</taxon>
        <taxon>Primates</taxon>
        <taxon>Haplorrhini</taxon>
        <taxon>Catarrhini</taxon>
        <taxon>Hominidae</taxon>
        <taxon>Pongo</taxon>
    </lineage>
</organism>
<sequence>MVAKQRIRMANEKHSKNITQRGNVAKTSRNAPGEKASVGPWLLALFIFVVCGSAIFQIIQSIRMGM</sequence>
<reference key="1">
    <citation type="submission" date="2004-11" db="EMBL/GenBank/DDBJ databases">
        <authorList>
            <consortium name="The German cDNA consortium"/>
        </authorList>
    </citation>
    <scope>NUCLEOTIDE SEQUENCE [LARGE SCALE MRNA]</scope>
    <source>
        <tissue>Kidney</tissue>
    </source>
</reference>
<name>SERP1_PONAB</name>
<protein>
    <recommendedName>
        <fullName>Stress-associated endoplasmic reticulum protein 1</fullName>
    </recommendedName>
    <alternativeName>
        <fullName>Ribosome-attached membrane protein 4</fullName>
    </alternativeName>
</protein>
<accession>Q5REZ1</accession>
<feature type="chain" id="PRO_0000274796" description="Stress-associated endoplasmic reticulum protein 1">
    <location>
        <begin position="1"/>
        <end position="66"/>
    </location>
</feature>
<feature type="topological domain" description="Cytoplasmic" evidence="2">
    <location>
        <begin position="1"/>
        <end position="38"/>
    </location>
</feature>
<feature type="transmembrane region" description="Helical" evidence="2">
    <location>
        <begin position="39"/>
        <end position="59"/>
    </location>
</feature>
<feature type="topological domain" description="Extracellular" evidence="2">
    <location>
        <begin position="60"/>
        <end position="66"/>
    </location>
</feature>
<feature type="region of interest" description="Disordered" evidence="3">
    <location>
        <begin position="1"/>
        <end position="33"/>
    </location>
</feature>
<feature type="compositionally biased region" description="Polar residues" evidence="3">
    <location>
        <begin position="17"/>
        <end position="30"/>
    </location>
</feature>
<keyword id="KW-0256">Endoplasmic reticulum</keyword>
<keyword id="KW-0472">Membrane</keyword>
<keyword id="KW-1185">Reference proteome</keyword>
<keyword id="KW-0812">Transmembrane</keyword>
<keyword id="KW-1133">Transmembrane helix</keyword>
<keyword id="KW-0834">Unfolded protein response</keyword>
<gene>
    <name type="primary">SERP1</name>
    <name type="synonym">RAMP4</name>
</gene>
<comment type="function">
    <text evidence="1">Interacts with target proteins during their translocation into the lumen of the endoplasmic reticulum. Protects unfolded target proteins against degradation during ER stress. May facilitate glycosylation of target proteins after termination of ER stress. May modulate the use of N-glycosylation sites on target proteins.</text>
</comment>
<comment type="subunit">
    <text evidence="1">Interacts with SEC61B, SEC61A1 and the SEC61 complex. Interacts with CANX.</text>
</comment>
<comment type="subcellular location">
    <subcellularLocation>
        <location evidence="1">Membrane</location>
        <topology evidence="1">Single-pass membrane protein</topology>
    </subcellularLocation>
    <subcellularLocation>
        <location evidence="1">Endoplasmic reticulum membrane</location>
        <topology evidence="1">Single-pass membrane protein</topology>
    </subcellularLocation>
</comment>
<comment type="similarity">
    <text evidence="4">Belongs to the RAMP4 family.</text>
</comment>
<proteinExistence type="inferred from homology"/>